<dbReference type="EC" id="3.1.11.6" evidence="1"/>
<dbReference type="EMBL" id="CP000611">
    <property type="protein sequence ID" value="ABQ72854.1"/>
    <property type="molecule type" value="Genomic_DNA"/>
</dbReference>
<dbReference type="RefSeq" id="WP_003405844.1">
    <property type="nucleotide sequence ID" value="NZ_CP016972.1"/>
</dbReference>
<dbReference type="SMR" id="A5U1F4"/>
<dbReference type="KEGG" id="mra:MRA_1118"/>
<dbReference type="eggNOG" id="COG1722">
    <property type="taxonomic scope" value="Bacteria"/>
</dbReference>
<dbReference type="HOGENOM" id="CLU_145918_0_2_11"/>
<dbReference type="Proteomes" id="UP000001988">
    <property type="component" value="Chromosome"/>
</dbReference>
<dbReference type="GO" id="GO:0005829">
    <property type="term" value="C:cytosol"/>
    <property type="evidence" value="ECO:0007669"/>
    <property type="project" value="TreeGrafter"/>
</dbReference>
<dbReference type="GO" id="GO:0009318">
    <property type="term" value="C:exodeoxyribonuclease VII complex"/>
    <property type="evidence" value="ECO:0007669"/>
    <property type="project" value="InterPro"/>
</dbReference>
<dbReference type="GO" id="GO:0008855">
    <property type="term" value="F:exodeoxyribonuclease VII activity"/>
    <property type="evidence" value="ECO:0007669"/>
    <property type="project" value="UniProtKB-UniRule"/>
</dbReference>
<dbReference type="GO" id="GO:0006308">
    <property type="term" value="P:DNA catabolic process"/>
    <property type="evidence" value="ECO:0007669"/>
    <property type="project" value="UniProtKB-UniRule"/>
</dbReference>
<dbReference type="FunFam" id="1.10.287.1040:FF:000004">
    <property type="entry name" value="Exodeoxyribonuclease 7 small subunit"/>
    <property type="match status" value="1"/>
</dbReference>
<dbReference type="Gene3D" id="1.10.287.1040">
    <property type="entry name" value="Exonuclease VII, small subunit"/>
    <property type="match status" value="1"/>
</dbReference>
<dbReference type="HAMAP" id="MF_00337">
    <property type="entry name" value="Exonuc_7_S"/>
    <property type="match status" value="1"/>
</dbReference>
<dbReference type="InterPro" id="IPR003761">
    <property type="entry name" value="Exonuc_VII_S"/>
</dbReference>
<dbReference type="InterPro" id="IPR037004">
    <property type="entry name" value="Exonuc_VII_ssu_sf"/>
</dbReference>
<dbReference type="NCBIfam" id="NF002139">
    <property type="entry name" value="PRK00977.1-3"/>
    <property type="match status" value="1"/>
</dbReference>
<dbReference type="NCBIfam" id="TIGR01280">
    <property type="entry name" value="xseB"/>
    <property type="match status" value="1"/>
</dbReference>
<dbReference type="PANTHER" id="PTHR34137">
    <property type="entry name" value="EXODEOXYRIBONUCLEASE 7 SMALL SUBUNIT"/>
    <property type="match status" value="1"/>
</dbReference>
<dbReference type="PANTHER" id="PTHR34137:SF1">
    <property type="entry name" value="EXODEOXYRIBONUCLEASE 7 SMALL SUBUNIT"/>
    <property type="match status" value="1"/>
</dbReference>
<dbReference type="Pfam" id="PF02609">
    <property type="entry name" value="Exonuc_VII_S"/>
    <property type="match status" value="1"/>
</dbReference>
<dbReference type="PIRSF" id="PIRSF006488">
    <property type="entry name" value="Exonuc_VII_S"/>
    <property type="match status" value="1"/>
</dbReference>
<dbReference type="SUPFAM" id="SSF116842">
    <property type="entry name" value="XseB-like"/>
    <property type="match status" value="1"/>
</dbReference>
<keyword id="KW-0963">Cytoplasm</keyword>
<keyword id="KW-0269">Exonuclease</keyword>
<keyword id="KW-0378">Hydrolase</keyword>
<keyword id="KW-0540">Nuclease</keyword>
<keyword id="KW-1185">Reference proteome</keyword>
<sequence length="85" mass="9322">MVCDPNGDDTGRTHATVPVSQLGYEACRDELMEVVRLLEQGGLDLDASLRLWERGEQLAKRCEEHLAGARQRVSDVLAGDEAQNG</sequence>
<proteinExistence type="inferred from homology"/>
<accession>A5U1F4</accession>
<comment type="function">
    <text evidence="1">Bidirectionally degrades single-stranded DNA into large acid-insoluble oligonucleotides, which are then degraded further into small acid-soluble oligonucleotides.</text>
</comment>
<comment type="catalytic activity">
    <reaction evidence="1">
        <text>Exonucleolytic cleavage in either 5'- to 3'- or 3'- to 5'-direction to yield nucleoside 5'-phosphates.</text>
        <dbReference type="EC" id="3.1.11.6"/>
    </reaction>
</comment>
<comment type="subunit">
    <text evidence="1">Heterooligomer composed of large and small subunits.</text>
</comment>
<comment type="subcellular location">
    <subcellularLocation>
        <location evidence="1">Cytoplasm</location>
    </subcellularLocation>
</comment>
<comment type="similarity">
    <text evidence="1">Belongs to the XseB family.</text>
</comment>
<gene>
    <name evidence="1" type="primary">xseB</name>
    <name type="ordered locus">MRA_1118</name>
</gene>
<protein>
    <recommendedName>
        <fullName evidence="1">Exodeoxyribonuclease 7 small subunit</fullName>
        <ecNumber evidence="1">3.1.11.6</ecNumber>
    </recommendedName>
    <alternativeName>
        <fullName evidence="1">Exodeoxyribonuclease VII small subunit</fullName>
        <shortName evidence="1">Exonuclease VII small subunit</shortName>
    </alternativeName>
</protein>
<feature type="chain" id="PRO_0000303726" description="Exodeoxyribonuclease 7 small subunit">
    <location>
        <begin position="1"/>
        <end position="85"/>
    </location>
</feature>
<evidence type="ECO:0000255" key="1">
    <source>
        <dbReference type="HAMAP-Rule" id="MF_00337"/>
    </source>
</evidence>
<name>EX7S_MYCTA</name>
<reference key="1">
    <citation type="journal article" date="2008" name="PLoS ONE">
        <title>Genetic basis of virulence attenuation revealed by comparative genomic analysis of Mycobacterium tuberculosis strain H37Ra versus H37Rv.</title>
        <authorList>
            <person name="Zheng H."/>
            <person name="Lu L."/>
            <person name="Wang B."/>
            <person name="Pu S."/>
            <person name="Zhang X."/>
            <person name="Zhu G."/>
            <person name="Shi W."/>
            <person name="Zhang L."/>
            <person name="Wang H."/>
            <person name="Wang S."/>
            <person name="Zhao G."/>
            <person name="Zhang Y."/>
        </authorList>
    </citation>
    <scope>NUCLEOTIDE SEQUENCE [LARGE SCALE GENOMIC DNA]</scope>
    <source>
        <strain>ATCC 25177 / H37Ra</strain>
    </source>
</reference>
<organism>
    <name type="scientific">Mycobacterium tuberculosis (strain ATCC 25177 / H37Ra)</name>
    <dbReference type="NCBI Taxonomy" id="419947"/>
    <lineage>
        <taxon>Bacteria</taxon>
        <taxon>Bacillati</taxon>
        <taxon>Actinomycetota</taxon>
        <taxon>Actinomycetes</taxon>
        <taxon>Mycobacteriales</taxon>
        <taxon>Mycobacteriaceae</taxon>
        <taxon>Mycobacterium</taxon>
        <taxon>Mycobacterium tuberculosis complex</taxon>
    </lineage>
</organism>